<organism>
    <name type="scientific">Actinobacillus succinogenes (strain ATCC 55618 / DSM 22257 / CCUG 43843 / 130Z)</name>
    <dbReference type="NCBI Taxonomy" id="339671"/>
    <lineage>
        <taxon>Bacteria</taxon>
        <taxon>Pseudomonadati</taxon>
        <taxon>Pseudomonadota</taxon>
        <taxon>Gammaproteobacteria</taxon>
        <taxon>Pasteurellales</taxon>
        <taxon>Pasteurellaceae</taxon>
        <taxon>Actinobacillus</taxon>
    </lineage>
</organism>
<sequence>MNSSRSLLALALLFISFLVYQQWEIDKAPKPVVRETAVSQSDTPNSSSASTSAVDSQAKGRVITLQNDVFRLKVDTLGGDVIESELLNYAQELNGEERFTLLENKDGTTYVAQSGLVGKNGIDSAAGRADYQVNGDNFVLAEGQDELSVPFTFEKDGVIYRKIFMLKRGSYDIAVNYEIRNQSDETIEVQPYGQLKHTLVESSGSMAMPTYTGGAYSSSETNYKKYSFDDMKGANLSVNTKAGWVAVLQHYFVSAWIPNQDADNQLYTTTNNGMGFIGFRGPTVTVPAGATETVKTALWTGPKLQNQMGEVAEHLDLTVDYGWAWFIAKPLFALLTLIQSLVSNWGLAIIGVTLVVKAILYPLTKAQYTSMAKMRMLQPKLQEMRERFGDDRQRMSQEMMKLYKEEKVNPLGGCLPLLIQMPIFIALYWTFMEAVELRHAPFFGWIQDLSAQDPYYILPLLMGGSMFLLQKLSPTPVADPMQQKVMNFMPVIFTVFFLWFPAGLVLYWLVSNVITIIQQQLIYRGLEKKGLHSRKSK</sequence>
<gene>
    <name evidence="1" type="primary">yidC</name>
    <name type="ordered locus">Asuc_2114</name>
</gene>
<keyword id="KW-0997">Cell inner membrane</keyword>
<keyword id="KW-1003">Cell membrane</keyword>
<keyword id="KW-0143">Chaperone</keyword>
<keyword id="KW-0472">Membrane</keyword>
<keyword id="KW-0653">Protein transport</keyword>
<keyword id="KW-1185">Reference proteome</keyword>
<keyword id="KW-0812">Transmembrane</keyword>
<keyword id="KW-1133">Transmembrane helix</keyword>
<keyword id="KW-0813">Transport</keyword>
<comment type="function">
    <text evidence="1">Required for the insertion and/or proper folding and/or complex formation of integral membrane proteins into the membrane. Involved in integration of membrane proteins that insert both dependently and independently of the Sec translocase complex, as well as at least some lipoproteins. Aids folding of multispanning membrane proteins.</text>
</comment>
<comment type="subunit">
    <text evidence="1">Interacts with the Sec translocase complex via SecD. Specifically interacts with transmembrane segments of nascent integral membrane proteins during membrane integration.</text>
</comment>
<comment type="subcellular location">
    <subcellularLocation>
        <location evidence="1">Cell inner membrane</location>
        <topology evidence="1">Multi-pass membrane protein</topology>
    </subcellularLocation>
</comment>
<comment type="similarity">
    <text evidence="1">Belongs to the OXA1/ALB3/YidC family. Type 1 subfamily.</text>
</comment>
<proteinExistence type="inferred from homology"/>
<dbReference type="EMBL" id="CP000746">
    <property type="protein sequence ID" value="ABR75458.1"/>
    <property type="molecule type" value="Genomic_DNA"/>
</dbReference>
<dbReference type="RefSeq" id="WP_012073834.1">
    <property type="nucleotide sequence ID" value="NC_009655.1"/>
</dbReference>
<dbReference type="SMR" id="A6VR61"/>
<dbReference type="STRING" id="339671.Asuc_2114"/>
<dbReference type="KEGG" id="asu:Asuc_2114"/>
<dbReference type="eggNOG" id="COG0706">
    <property type="taxonomic scope" value="Bacteria"/>
</dbReference>
<dbReference type="HOGENOM" id="CLU_016535_3_0_6"/>
<dbReference type="OrthoDB" id="9780552at2"/>
<dbReference type="Proteomes" id="UP000001114">
    <property type="component" value="Chromosome"/>
</dbReference>
<dbReference type="GO" id="GO:0005886">
    <property type="term" value="C:plasma membrane"/>
    <property type="evidence" value="ECO:0007669"/>
    <property type="project" value="UniProtKB-SubCell"/>
</dbReference>
<dbReference type="GO" id="GO:0032977">
    <property type="term" value="F:membrane insertase activity"/>
    <property type="evidence" value="ECO:0007669"/>
    <property type="project" value="InterPro"/>
</dbReference>
<dbReference type="GO" id="GO:0051205">
    <property type="term" value="P:protein insertion into membrane"/>
    <property type="evidence" value="ECO:0007669"/>
    <property type="project" value="TreeGrafter"/>
</dbReference>
<dbReference type="GO" id="GO:0015031">
    <property type="term" value="P:protein transport"/>
    <property type="evidence" value="ECO:0007669"/>
    <property type="project" value="UniProtKB-KW"/>
</dbReference>
<dbReference type="CDD" id="cd20070">
    <property type="entry name" value="5TM_YidC_Alb3"/>
    <property type="match status" value="1"/>
</dbReference>
<dbReference type="CDD" id="cd19961">
    <property type="entry name" value="EcYidC-like_peri"/>
    <property type="match status" value="1"/>
</dbReference>
<dbReference type="Gene3D" id="2.70.98.90">
    <property type="match status" value="1"/>
</dbReference>
<dbReference type="HAMAP" id="MF_01810">
    <property type="entry name" value="YidC_type1"/>
    <property type="match status" value="1"/>
</dbReference>
<dbReference type="InterPro" id="IPR019998">
    <property type="entry name" value="Membr_insert_YidC"/>
</dbReference>
<dbReference type="InterPro" id="IPR028053">
    <property type="entry name" value="Membr_insert_YidC_N"/>
</dbReference>
<dbReference type="InterPro" id="IPR001708">
    <property type="entry name" value="YidC/ALB3/OXA1/COX18"/>
</dbReference>
<dbReference type="InterPro" id="IPR028055">
    <property type="entry name" value="YidC/Oxa/ALB_C"/>
</dbReference>
<dbReference type="InterPro" id="IPR047196">
    <property type="entry name" value="YidC_ALB_C"/>
</dbReference>
<dbReference type="InterPro" id="IPR038221">
    <property type="entry name" value="YidC_periplasmic_sf"/>
</dbReference>
<dbReference type="NCBIfam" id="NF002351">
    <property type="entry name" value="PRK01318.1-1"/>
    <property type="match status" value="1"/>
</dbReference>
<dbReference type="NCBIfam" id="NF002352">
    <property type="entry name" value="PRK01318.1-3"/>
    <property type="match status" value="1"/>
</dbReference>
<dbReference type="NCBIfam" id="TIGR03593">
    <property type="entry name" value="yidC_nterm"/>
    <property type="match status" value="1"/>
</dbReference>
<dbReference type="NCBIfam" id="TIGR03592">
    <property type="entry name" value="yidC_oxa1_cterm"/>
    <property type="match status" value="1"/>
</dbReference>
<dbReference type="PANTHER" id="PTHR12428:SF65">
    <property type="entry name" value="CYTOCHROME C OXIDASE ASSEMBLY PROTEIN COX18, MITOCHONDRIAL"/>
    <property type="match status" value="1"/>
</dbReference>
<dbReference type="PANTHER" id="PTHR12428">
    <property type="entry name" value="OXA1"/>
    <property type="match status" value="1"/>
</dbReference>
<dbReference type="Pfam" id="PF02096">
    <property type="entry name" value="60KD_IMP"/>
    <property type="match status" value="1"/>
</dbReference>
<dbReference type="Pfam" id="PF14849">
    <property type="entry name" value="YidC_periplas"/>
    <property type="match status" value="1"/>
</dbReference>
<dbReference type="PRINTS" id="PR00701">
    <property type="entry name" value="60KDINNERMP"/>
</dbReference>
<dbReference type="PRINTS" id="PR01900">
    <property type="entry name" value="YIDCPROTEIN"/>
</dbReference>
<evidence type="ECO:0000255" key="1">
    <source>
        <dbReference type="HAMAP-Rule" id="MF_01810"/>
    </source>
</evidence>
<accession>A6VR61</accession>
<name>YIDC_ACTSZ</name>
<reference key="1">
    <citation type="journal article" date="2010" name="BMC Genomics">
        <title>A genomic perspective on the potential of Actinobacillus succinogenes for industrial succinate production.</title>
        <authorList>
            <person name="McKinlay J.B."/>
            <person name="Laivenieks M."/>
            <person name="Schindler B.D."/>
            <person name="McKinlay A.A."/>
            <person name="Siddaramappa S."/>
            <person name="Challacombe J.F."/>
            <person name="Lowry S.R."/>
            <person name="Clum A."/>
            <person name="Lapidus A.L."/>
            <person name="Burkhart K.B."/>
            <person name="Harkins V."/>
            <person name="Vieille C."/>
        </authorList>
    </citation>
    <scope>NUCLEOTIDE SEQUENCE [LARGE SCALE GENOMIC DNA]</scope>
    <source>
        <strain>ATCC 55618 / DSM 22257 / CCUG 43843 / 130Z</strain>
    </source>
</reference>
<feature type="chain" id="PRO_1000073674" description="Membrane protein insertase YidC">
    <location>
        <begin position="1"/>
        <end position="537"/>
    </location>
</feature>
<feature type="transmembrane region" description="Helical" evidence="1">
    <location>
        <begin position="6"/>
        <end position="26"/>
    </location>
</feature>
<feature type="transmembrane region" description="Helical" evidence="1">
    <location>
        <begin position="341"/>
        <end position="363"/>
    </location>
</feature>
<feature type="transmembrane region" description="Helical" evidence="1">
    <location>
        <begin position="411"/>
        <end position="431"/>
    </location>
</feature>
<feature type="transmembrane region" description="Helical" evidence="1">
    <location>
        <begin position="449"/>
        <end position="469"/>
    </location>
</feature>
<feature type="transmembrane region" description="Helical" evidence="1">
    <location>
        <begin position="490"/>
        <end position="510"/>
    </location>
</feature>
<protein>
    <recommendedName>
        <fullName evidence="1">Membrane protein insertase YidC</fullName>
    </recommendedName>
    <alternativeName>
        <fullName evidence="1">Foldase YidC</fullName>
    </alternativeName>
    <alternativeName>
        <fullName evidence="1">Membrane integrase YidC</fullName>
    </alternativeName>
    <alternativeName>
        <fullName evidence="1">Membrane protein YidC</fullName>
    </alternativeName>
</protein>